<reference key="1">
    <citation type="journal article" date="2005" name="Genome Res.">
        <title>Complete genome sequence of the hyperthermophilic archaeon Thermococcus kodakaraensis KOD1 and comparison with Pyrococcus genomes.</title>
        <authorList>
            <person name="Fukui T."/>
            <person name="Atomi H."/>
            <person name="Kanai T."/>
            <person name="Matsumi R."/>
            <person name="Fujiwara S."/>
            <person name="Imanaka T."/>
        </authorList>
    </citation>
    <scope>NUCLEOTIDE SEQUENCE [LARGE SCALE GENOMIC DNA]</scope>
    <source>
        <strain>ATCC BAA-918 / JCM 12380 / KOD1</strain>
    </source>
</reference>
<evidence type="ECO:0000255" key="1">
    <source>
        <dbReference type="HAMAP-Rule" id="MF_00497"/>
    </source>
</evidence>
<organism>
    <name type="scientific">Thermococcus kodakarensis (strain ATCC BAA-918 / JCM 12380 / KOD1)</name>
    <name type="common">Pyrococcus kodakaraensis (strain KOD1)</name>
    <dbReference type="NCBI Taxonomy" id="69014"/>
    <lineage>
        <taxon>Archaea</taxon>
        <taxon>Methanobacteriati</taxon>
        <taxon>Methanobacteriota</taxon>
        <taxon>Thermococci</taxon>
        <taxon>Thermococcales</taxon>
        <taxon>Thermococcaceae</taxon>
        <taxon>Thermococcus</taxon>
    </lineage>
</organism>
<feature type="chain" id="PRO_0000157351" description="Glycerol-1-phosphate dehydrogenase [NAD(P)+]">
    <location>
        <begin position="1"/>
        <end position="351"/>
    </location>
</feature>
<feature type="binding site" evidence="1">
    <location>
        <begin position="98"/>
        <end position="102"/>
    </location>
    <ligand>
        <name>NAD(+)</name>
        <dbReference type="ChEBI" id="CHEBI:57540"/>
    </ligand>
</feature>
<feature type="binding site" evidence="1">
    <location>
        <begin position="120"/>
        <end position="123"/>
    </location>
    <ligand>
        <name>NAD(+)</name>
        <dbReference type="ChEBI" id="CHEBI:57540"/>
    </ligand>
</feature>
<feature type="binding site" evidence="1">
    <location>
        <position position="125"/>
    </location>
    <ligand>
        <name>substrate</name>
    </ligand>
</feature>
<feature type="binding site" evidence="1">
    <location>
        <position position="129"/>
    </location>
    <ligand>
        <name>NAD(+)</name>
        <dbReference type="ChEBI" id="CHEBI:57540"/>
    </ligand>
</feature>
<feature type="binding site" evidence="1">
    <location>
        <position position="172"/>
    </location>
    <ligand>
        <name>substrate</name>
    </ligand>
</feature>
<feature type="binding site" evidence="1">
    <location>
        <position position="172"/>
    </location>
    <ligand>
        <name>Zn(2+)</name>
        <dbReference type="ChEBI" id="CHEBI:29105"/>
        <note>catalytic</note>
    </ligand>
</feature>
<feature type="binding site" evidence="1">
    <location>
        <position position="252"/>
    </location>
    <ligand>
        <name>Zn(2+)</name>
        <dbReference type="ChEBI" id="CHEBI:29105"/>
        <note>catalytic</note>
    </ligand>
</feature>
<feature type="binding site" evidence="1">
    <location>
        <position position="256"/>
    </location>
    <ligand>
        <name>substrate</name>
    </ligand>
</feature>
<feature type="binding site" evidence="1">
    <location>
        <position position="268"/>
    </location>
    <ligand>
        <name>Zn(2+)</name>
        <dbReference type="ChEBI" id="CHEBI:29105"/>
        <note>catalytic</note>
    </ligand>
</feature>
<protein>
    <recommendedName>
        <fullName evidence="1">Glycerol-1-phosphate dehydrogenase [NAD(P)+]</fullName>
        <shortName evidence="1">G1P dehydrogenase</shortName>
        <shortName evidence="1">G1PDH</shortName>
        <ecNumber evidence="1">1.1.1.261</ecNumber>
    </recommendedName>
    <alternativeName>
        <fullName evidence="1">Enantiomeric glycerophosphate synthase</fullName>
    </alternativeName>
    <alternativeName>
        <fullName evidence="1">sn-glycerol-1-phosphate dehydrogenase</fullName>
    </alternativeName>
</protein>
<name>G1PDH_THEKO</name>
<dbReference type="EC" id="1.1.1.261" evidence="1"/>
<dbReference type="EMBL" id="AP006878">
    <property type="protein sequence ID" value="BAD84978.1"/>
    <property type="molecule type" value="Genomic_DNA"/>
</dbReference>
<dbReference type="RefSeq" id="WP_011249740.1">
    <property type="nucleotide sequence ID" value="NC_006624.1"/>
</dbReference>
<dbReference type="SMR" id="Q5JH91"/>
<dbReference type="FunCoup" id="Q5JH91">
    <property type="interactions" value="9"/>
</dbReference>
<dbReference type="STRING" id="69014.TK0789"/>
<dbReference type="EnsemblBacteria" id="BAD84978">
    <property type="protein sequence ID" value="BAD84978"/>
    <property type="gene ID" value="TK0789"/>
</dbReference>
<dbReference type="GeneID" id="78447305"/>
<dbReference type="KEGG" id="tko:TK0789"/>
<dbReference type="PATRIC" id="fig|69014.16.peg.769"/>
<dbReference type="eggNOG" id="arCOG00982">
    <property type="taxonomic scope" value="Archaea"/>
</dbReference>
<dbReference type="HOGENOM" id="CLU_038362_0_0_2"/>
<dbReference type="InParanoid" id="Q5JH91"/>
<dbReference type="OrthoDB" id="8656at2157"/>
<dbReference type="PhylomeDB" id="Q5JH91"/>
<dbReference type="UniPathway" id="UPA00940"/>
<dbReference type="Proteomes" id="UP000000536">
    <property type="component" value="Chromosome"/>
</dbReference>
<dbReference type="GO" id="GO:0005737">
    <property type="term" value="C:cytoplasm"/>
    <property type="evidence" value="ECO:0007669"/>
    <property type="project" value="UniProtKB-SubCell"/>
</dbReference>
<dbReference type="GO" id="GO:0106357">
    <property type="term" value="F:glycerol-1-phosphate dehydrogenase (NAD+) activity"/>
    <property type="evidence" value="ECO:0007669"/>
    <property type="project" value="RHEA"/>
</dbReference>
<dbReference type="GO" id="GO:0106358">
    <property type="term" value="F:glycerol-1-phosphate dehydrogenase (NADP+) activity"/>
    <property type="evidence" value="ECO:0007669"/>
    <property type="project" value="RHEA"/>
</dbReference>
<dbReference type="GO" id="GO:0046872">
    <property type="term" value="F:metal ion binding"/>
    <property type="evidence" value="ECO:0007669"/>
    <property type="project" value="UniProtKB-KW"/>
</dbReference>
<dbReference type="GO" id="GO:0006650">
    <property type="term" value="P:glycerophospholipid metabolic process"/>
    <property type="evidence" value="ECO:0007669"/>
    <property type="project" value="UniProtKB-UniRule"/>
</dbReference>
<dbReference type="GO" id="GO:0008654">
    <property type="term" value="P:phospholipid biosynthetic process"/>
    <property type="evidence" value="ECO:0007669"/>
    <property type="project" value="UniProtKB-KW"/>
</dbReference>
<dbReference type="CDD" id="cd08173">
    <property type="entry name" value="Gro1PDH"/>
    <property type="match status" value="1"/>
</dbReference>
<dbReference type="Gene3D" id="3.40.50.1970">
    <property type="match status" value="1"/>
</dbReference>
<dbReference type="Gene3D" id="1.20.1090.10">
    <property type="entry name" value="Dehydroquinate synthase-like - alpha domain"/>
    <property type="match status" value="1"/>
</dbReference>
<dbReference type="HAMAP" id="MF_00497_A">
    <property type="entry name" value="G1P_dehydrogenase_A"/>
    <property type="match status" value="1"/>
</dbReference>
<dbReference type="InterPro" id="IPR023002">
    <property type="entry name" value="G1P_dehydrogenase_arc"/>
</dbReference>
<dbReference type="InterPro" id="IPR032837">
    <property type="entry name" value="G1PDH"/>
</dbReference>
<dbReference type="InterPro" id="IPR016205">
    <property type="entry name" value="Glycerol_DH"/>
</dbReference>
<dbReference type="NCBIfam" id="NF002022">
    <property type="entry name" value="PRK00843.1"/>
    <property type="match status" value="1"/>
</dbReference>
<dbReference type="PANTHER" id="PTHR43616">
    <property type="entry name" value="GLYCEROL DEHYDROGENASE"/>
    <property type="match status" value="1"/>
</dbReference>
<dbReference type="PANTHER" id="PTHR43616:SF5">
    <property type="entry name" value="GLYCEROL DEHYDROGENASE 1"/>
    <property type="match status" value="1"/>
</dbReference>
<dbReference type="Pfam" id="PF13685">
    <property type="entry name" value="Fe-ADH_2"/>
    <property type="match status" value="1"/>
</dbReference>
<dbReference type="PIRSF" id="PIRSF000112">
    <property type="entry name" value="Glycerol_dehydrogenase"/>
    <property type="match status" value="1"/>
</dbReference>
<dbReference type="SUPFAM" id="SSF56796">
    <property type="entry name" value="Dehydroquinate synthase-like"/>
    <property type="match status" value="1"/>
</dbReference>
<proteinExistence type="inferred from homology"/>
<accession>Q5JH91</accession>
<gene>
    <name evidence="1" type="primary">egsA</name>
    <name type="ordered locus">TK0789</name>
</gene>
<keyword id="KW-0963">Cytoplasm</keyword>
<keyword id="KW-0444">Lipid biosynthesis</keyword>
<keyword id="KW-0443">Lipid metabolism</keyword>
<keyword id="KW-0479">Metal-binding</keyword>
<keyword id="KW-0520">NAD</keyword>
<keyword id="KW-0521">NADP</keyword>
<keyword id="KW-0560">Oxidoreductase</keyword>
<keyword id="KW-0594">Phospholipid biosynthesis</keyword>
<keyword id="KW-1208">Phospholipid metabolism</keyword>
<keyword id="KW-1185">Reference proteome</keyword>
<keyword id="KW-0862">Zinc</keyword>
<comment type="function">
    <text evidence="1">Catalyzes the NAD(P)H-dependent reduction of dihydroxyacetonephosphate (DHAP or glycerone phosphate) to glycerol 1-phosphate (G1P). The G1P thus generated is used as the glycerophosphate backbone of phospholipids in the cellular membranes of Archaea.</text>
</comment>
<comment type="catalytic activity">
    <reaction evidence="1">
        <text>sn-glycerol 1-phosphate + NAD(+) = dihydroxyacetone phosphate + NADH + H(+)</text>
        <dbReference type="Rhea" id="RHEA:21412"/>
        <dbReference type="ChEBI" id="CHEBI:15378"/>
        <dbReference type="ChEBI" id="CHEBI:57540"/>
        <dbReference type="ChEBI" id="CHEBI:57642"/>
        <dbReference type="ChEBI" id="CHEBI:57685"/>
        <dbReference type="ChEBI" id="CHEBI:57945"/>
        <dbReference type="EC" id="1.1.1.261"/>
    </reaction>
</comment>
<comment type="catalytic activity">
    <reaction evidence="1">
        <text>sn-glycerol 1-phosphate + NADP(+) = dihydroxyacetone phosphate + NADPH + H(+)</text>
        <dbReference type="Rhea" id="RHEA:21416"/>
        <dbReference type="ChEBI" id="CHEBI:15378"/>
        <dbReference type="ChEBI" id="CHEBI:57642"/>
        <dbReference type="ChEBI" id="CHEBI:57685"/>
        <dbReference type="ChEBI" id="CHEBI:57783"/>
        <dbReference type="ChEBI" id="CHEBI:58349"/>
        <dbReference type="EC" id="1.1.1.261"/>
    </reaction>
</comment>
<comment type="cofactor">
    <cofactor evidence="1">
        <name>Zn(2+)</name>
        <dbReference type="ChEBI" id="CHEBI:29105"/>
    </cofactor>
    <text evidence="1">Binds 1 zinc ion per subunit.</text>
</comment>
<comment type="pathway">
    <text evidence="1">Membrane lipid metabolism; glycerophospholipid metabolism.</text>
</comment>
<comment type="subcellular location">
    <subcellularLocation>
        <location evidence="1">Cytoplasm</location>
    </subcellularLocation>
</comment>
<comment type="similarity">
    <text evidence="1">Belongs to the glycerol-1-phosphate dehydrogenase family.</text>
</comment>
<sequence length="351" mass="37756">MERRIHLMQLPREVLLGENLTGEVVSVAKRIGLTGKALVIYGPKTKEIAGRDVEDAIKSAYEVSSLTIRKGATMEEVERTIEKIKDEGIGWVIAVGGGSIIDVAKLSSFKTGVPFISFPTTASHDGIASANASIKDLGSKTSVKAVPPVAVIADVKVIKTAPYRYLAAGVGDTISNLTAVRDWQLAHRIKGEYYSEYAASLSLMSAKMVMRNADIIRLGNEESVRKVIKALISTGVAMSIAGSSRPASGAEHLFSHALDMLLDKPALHGEQTGLGTIIMAYLHGMKWERVRETLKRVGAPTNAYELGIDPEVIIEALTIAHTIRPERYTILGKDGLTREAAEKAAKITGVI</sequence>